<proteinExistence type="inferred from homology"/>
<feature type="signal peptide" evidence="1">
    <location>
        <begin position="1"/>
        <end position="22"/>
    </location>
</feature>
<feature type="chain" id="PRO_0000416730" description="Protein US34">
    <location>
        <begin position="23"/>
        <end position="163"/>
    </location>
</feature>
<keyword id="KW-1185">Reference proteome</keyword>
<keyword id="KW-0732">Signal</keyword>
<comment type="similarity">
    <text evidence="2">Belongs to the HHV-5 US34 protein family.</text>
</comment>
<accession>F5HEF3</accession>
<dbReference type="EMBL" id="AY446894">
    <property type="protein sequence ID" value="AAR31721.1"/>
    <property type="molecule type" value="Genomic_DNA"/>
</dbReference>
<dbReference type="RefSeq" id="YP_081617.1">
    <property type="nucleotide sequence ID" value="NC_006273.2"/>
</dbReference>
<dbReference type="KEGG" id="vg:3077433"/>
<dbReference type="Reactome" id="R-HSA-9609690">
    <property type="pathway name" value="HCMV Early Events"/>
</dbReference>
<dbReference type="Proteomes" id="UP000000938">
    <property type="component" value="Segment"/>
</dbReference>
<reference key="1">
    <citation type="journal article" date="2004" name="J. Gen. Virol.">
        <title>Genetic content of wild-type human cytomegalovirus.</title>
        <authorList>
            <person name="Dolan A."/>
            <person name="Cunningham C."/>
            <person name="Hector R.D."/>
            <person name="Hassan-Walker A.F."/>
            <person name="Lee L."/>
            <person name="Addison C."/>
            <person name="Dargan D.J."/>
            <person name="McGeoch D.J."/>
            <person name="Gatherer D."/>
            <person name="Emery V.C."/>
            <person name="Griffiths P.D."/>
            <person name="Sinzger C."/>
            <person name="McSharry B.P."/>
            <person name="Wilkinson G.W.G."/>
            <person name="Davison A.J."/>
        </authorList>
    </citation>
    <scope>NUCLEOTIDE SEQUENCE [LARGE SCALE GENOMIC DNA]</scope>
</reference>
<evidence type="ECO:0000255" key="1"/>
<evidence type="ECO:0000305" key="2"/>
<organism>
    <name type="scientific">Human cytomegalovirus (strain Merlin)</name>
    <name type="common">HHV-5</name>
    <name type="synonym">Human herpesvirus 5</name>
    <dbReference type="NCBI Taxonomy" id="295027"/>
    <lineage>
        <taxon>Viruses</taxon>
        <taxon>Duplodnaviria</taxon>
        <taxon>Heunggongvirae</taxon>
        <taxon>Peploviricota</taxon>
        <taxon>Herviviricetes</taxon>
        <taxon>Herpesvirales</taxon>
        <taxon>Orthoherpesviridae</taxon>
        <taxon>Betaherpesvirinae</taxon>
        <taxon>Cytomegalovirus</taxon>
        <taxon>Cytomegalovirus humanbeta5</taxon>
        <taxon>Human cytomegalovirus</taxon>
    </lineage>
</organism>
<organismHost>
    <name type="scientific">Homo sapiens</name>
    <name type="common">Human</name>
    <dbReference type="NCBI Taxonomy" id="9606"/>
</organismHost>
<sequence>MNLEQLINVLGLLVWIAARAVSRVGPHGSGLVYRELHDFYGYLQLDLLGPVVAGNRSVRTWREQADRARGTFVRRSGLNTSHILPVGGLSGGSGTLPAGLYRPEEEVFLLLNRCHGPLSTPKSACLAEVGVANASFLSRFNVGDFHGASWENGTAPDGEPGVC</sequence>
<name>US34_HCMVM</name>
<gene>
    <name type="primary">US34</name>
</gene>
<protein>
    <recommendedName>
        <fullName>Protein US34</fullName>
    </recommendedName>
</protein>